<gene>
    <name type="primary">ttgC</name>
    <name type="ordered locus">T1E_0241</name>
</gene>
<dbReference type="EMBL" id="AF031417">
    <property type="protein sequence ID" value="AAD39554.1"/>
    <property type="molecule type" value="Genomic_DNA"/>
</dbReference>
<dbReference type="EMBL" id="CP003734">
    <property type="protein sequence ID" value="AFO46100.1"/>
    <property type="molecule type" value="Genomic_DNA"/>
</dbReference>
<dbReference type="RefSeq" id="WP_003251955.1">
    <property type="nucleotide sequence ID" value="NZ_CP159468.1"/>
</dbReference>
<dbReference type="SMR" id="Q9WWZ8"/>
<dbReference type="TCDB" id="2.A.6.2.9">
    <property type="family name" value="the resistance-nodulation-cell division (rnd) superfamily"/>
</dbReference>
<dbReference type="KEGG" id="ppx:T1E_0241"/>
<dbReference type="PATRIC" id="fig|1196325.3.peg.242"/>
<dbReference type="HOGENOM" id="CLU_012817_13_3_6"/>
<dbReference type="Proteomes" id="UP000006503">
    <property type="component" value="Chromosome"/>
</dbReference>
<dbReference type="GO" id="GO:0009279">
    <property type="term" value="C:cell outer membrane"/>
    <property type="evidence" value="ECO:0007669"/>
    <property type="project" value="UniProtKB-SubCell"/>
</dbReference>
<dbReference type="GO" id="GO:0015562">
    <property type="term" value="F:efflux transmembrane transporter activity"/>
    <property type="evidence" value="ECO:0007669"/>
    <property type="project" value="InterPro"/>
</dbReference>
<dbReference type="GO" id="GO:0046677">
    <property type="term" value="P:response to antibiotic"/>
    <property type="evidence" value="ECO:0007669"/>
    <property type="project" value="UniProtKB-KW"/>
</dbReference>
<dbReference type="Gene3D" id="1.20.1600.10">
    <property type="entry name" value="Outer membrane efflux proteins (OEP)"/>
    <property type="match status" value="1"/>
</dbReference>
<dbReference type="Gene3D" id="2.20.200.10">
    <property type="entry name" value="Outer membrane efflux proteins (OEP)"/>
    <property type="match status" value="1"/>
</dbReference>
<dbReference type="InterPro" id="IPR050737">
    <property type="entry name" value="OMF"/>
</dbReference>
<dbReference type="InterPro" id="IPR003423">
    <property type="entry name" value="OMP_efflux"/>
</dbReference>
<dbReference type="InterPro" id="IPR010131">
    <property type="entry name" value="RND_efflux_OM_lipoprot_NodT"/>
</dbReference>
<dbReference type="NCBIfam" id="TIGR01845">
    <property type="entry name" value="outer_NodT"/>
    <property type="match status" value="1"/>
</dbReference>
<dbReference type="PANTHER" id="PTHR30203:SF32">
    <property type="entry name" value="CATION EFFLUX SYSTEM PROTEIN CUSC"/>
    <property type="match status" value="1"/>
</dbReference>
<dbReference type="PANTHER" id="PTHR30203">
    <property type="entry name" value="OUTER MEMBRANE CATION EFFLUX PROTEIN"/>
    <property type="match status" value="1"/>
</dbReference>
<dbReference type="Pfam" id="PF02321">
    <property type="entry name" value="OEP"/>
    <property type="match status" value="2"/>
</dbReference>
<dbReference type="SUPFAM" id="SSF56954">
    <property type="entry name" value="Outer membrane efflux proteins (OEP)"/>
    <property type="match status" value="1"/>
</dbReference>
<dbReference type="PROSITE" id="PS51257">
    <property type="entry name" value="PROKAR_LIPOPROTEIN"/>
    <property type="match status" value="1"/>
</dbReference>
<protein>
    <recommendedName>
        <fullName>Toluene efflux pump outer membrane protein TtgC</fullName>
    </recommendedName>
</protein>
<keyword id="KW-0046">Antibiotic resistance</keyword>
<keyword id="KW-0998">Cell outer membrane</keyword>
<keyword id="KW-0449">Lipoprotein</keyword>
<keyword id="KW-0472">Membrane</keyword>
<keyword id="KW-0564">Palmitate</keyword>
<keyword id="KW-0732">Signal</keyword>
<keyword id="KW-0812">Transmembrane</keyword>
<keyword id="KW-1134">Transmembrane beta strand</keyword>
<keyword id="KW-0813">Transport</keyword>
<sequence length="484" mass="52848">MTKSLLSLAVTAFILGGCSLIPDYQTPEAPVAAQWPQGPAYSPTQSADVAAAEQGWRQFFHDPALQQLIQTSLVNNRDLRVAALNLDAYRAQYRIQRADLFPAVSATGSGSRQRVPANMSQTGESGITSQYSATLGVSAYELDLFGRVRSLTEQALETYLSSEQARRSTQIALVASVANAYYTWQADQALFKLTEETLKTYEESYNLTRRSNEVGVASALDVSQARTAVEGARVKYSQYQRLVAQDVNSLTVLLGTGIPADLAKPLELDADQLAEVPAGLPSDILQRRPDIQEAEHLLKAANANIGAARAAFFPSISLTANAGSLSPDMGHLFAGGQGTWLFQPQINLPIFNAGSLKASLDYSKIQKDINVAKYEKTIQTAFQEVSDGLAARKTFEEQLQAQRDLVQANQDYYRLAERRYRIGIDSNLTFLDAQRNLFSAQQALIGDRLSQLTSEVNLYKALGGGWYEQTGQANQQASVETPKG</sequence>
<proteinExistence type="evidence at transcript level"/>
<name>TTGC_PSEPT</name>
<feature type="signal peptide" evidence="1">
    <location>
        <begin position="1"/>
        <end position="17"/>
    </location>
</feature>
<feature type="chain" id="PRO_0000031002" description="Toluene efflux pump outer membrane protein TtgC">
    <location>
        <begin position="18"/>
        <end position="484"/>
    </location>
</feature>
<feature type="lipid moiety-binding region" description="N-palmitoyl cysteine" evidence="1">
    <location>
        <position position="18"/>
    </location>
</feature>
<feature type="lipid moiety-binding region" description="S-diacylglycerol cysteine" evidence="1">
    <location>
        <position position="18"/>
    </location>
</feature>
<reference key="1">
    <citation type="journal article" date="1998" name="J. Bacteriol.">
        <title>Efflux pumps involved in toluene tolerance in Pseudomonas putida DOT-T1E.</title>
        <authorList>
            <person name="Ramos J.L."/>
            <person name="Duque E."/>
            <person name="Godoy P."/>
            <person name="Segura A."/>
        </authorList>
    </citation>
    <scope>NUCLEOTIDE SEQUENCE [GENOMIC DNA]</scope>
    <source>
        <strain>DOT-T1E</strain>
    </source>
</reference>
<reference key="2">
    <citation type="journal article" date="2013" name="Microb. Biotechnol.">
        <title>Metabolic potential of the organic-solvent tolerant Pseudomonas putida DOT-T1E deduced from its annotated genome.</title>
        <authorList>
            <person name="Udaondo Z."/>
            <person name="Molina L."/>
            <person name="Daniels C."/>
            <person name="Gomez M.J."/>
            <person name="Molina-Henares M.A."/>
            <person name="Matilla M.A."/>
            <person name="Roca A."/>
            <person name="Fernandez M."/>
            <person name="Duque E."/>
            <person name="Segura A."/>
            <person name="Ramos J.L."/>
        </authorList>
    </citation>
    <scope>NUCLEOTIDE SEQUENCE [LARGE SCALE GENOMIC DNA]</scope>
    <source>
        <strain>DOT-T1E</strain>
    </source>
</reference>
<reference key="3">
    <citation type="journal article" date="2001" name="J. Bacteriol.">
        <title>Three efflux pumps are required to provide efficient tolerance to toluene in Pseudomonas putida DOT-T1E.</title>
        <authorList>
            <person name="Rojas A."/>
            <person name="Duque E."/>
            <person name="Mosqueda G."/>
            <person name="Golden G."/>
            <person name="Hurtado A."/>
            <person name="Ramos J.L."/>
            <person name="Segura A."/>
        </authorList>
    </citation>
    <scope>EFFLUX PUMP SUBSTRATES</scope>
    <source>
        <strain>DOT-T1E</strain>
    </source>
</reference>
<reference key="4">
    <citation type="journal article" date="2003" name="Antimicrob. Agents Chemother.">
        <title>Antibiotic-dependent induction of Pseudomonas putida DOT-T1E TtgABC efflux pump is mediated by the drug binding repressor TtgR.</title>
        <authorList>
            <person name="Teran W."/>
            <person name="Felipe A."/>
            <person name="Segura A."/>
            <person name="Rojas A."/>
            <person name="Ramos J.L."/>
            <person name="Gallegos M.T."/>
        </authorList>
    </citation>
    <scope>INDUCTION</scope>
    <source>
        <strain>DOT-T1E</strain>
    </source>
</reference>
<evidence type="ECO:0000255" key="1">
    <source>
        <dbReference type="PROSITE-ProRule" id="PRU00303"/>
    </source>
</evidence>
<evidence type="ECO:0000269" key="2">
    <source>
    </source>
</evidence>
<evidence type="ECO:0000305" key="3"/>
<organism>
    <name type="scientific">Pseudomonas putida (strain DOT-T1E)</name>
    <dbReference type="NCBI Taxonomy" id="1196325"/>
    <lineage>
        <taxon>Bacteria</taxon>
        <taxon>Pseudomonadati</taxon>
        <taxon>Pseudomonadota</taxon>
        <taxon>Gammaproteobacteria</taxon>
        <taxon>Pseudomonadales</taxon>
        <taxon>Pseudomonadaceae</taxon>
        <taxon>Pseudomonas</taxon>
    </lineage>
</organism>
<accession>Q9WWZ8</accession>
<accession>I7AU11</accession>
<comment type="function">
    <text>The outer membrane component of a constitutive organic solvent efflux system. Is involved in export of toluene, styrene, m-xylene, propylbenzene and ethylbenzene. Also exports AMP and the antibiotics carbenicillin, nalidixic acid, chloramphenicol and tetracycline.</text>
</comment>
<comment type="subcellular location">
    <subcellularLocation>
        <location evidence="3">Cell outer membrane</location>
        <topology evidence="1">Lipid-anchor</topology>
    </subcellularLocation>
</comment>
<comment type="induction">
    <text evidence="2">The ttgABC operon is repressed by toluene; this is mediated by TtgR. The ttgABC operon is induced in response to chloramphenicol and tetracycline.</text>
</comment>
<comment type="similarity">
    <text evidence="3">Belongs to the outer membrane factor (OMF) (TC 1.B.17) family.</text>
</comment>
<comment type="caution">
    <text evidence="3">There are 4 nearly identical operons in various strains of P.putida. This one and the mepABC operon of strain KT2442-TOL function in solvent and antibiotic efflux; however the arpABC operon of strain S12 functions only in antibiotic efflux. This may be due to different protein expression levels. In strain KT2440 the equivalent operon does not seem to function in toluene efflux.</text>
</comment>